<sequence length="138" mass="15716">MLIPKRVKYRRQHRPTRRGVSKGGNRVTFGDYGVQALEPAYITNRQIEAARIAINRHVKRGGKVWINIFPDRPLTQKPLGVRMGSGKGPVEKWIANVKPGRILFEMSYPSEEVALEALRRAGAKLPCKVRIVKKEDQF</sequence>
<name>RL16_CORK4</name>
<reference key="1">
    <citation type="journal article" date="2008" name="J. Biotechnol.">
        <title>Ultrafast pyrosequencing of Corynebacterium kroppenstedtii DSM44385 revealed insights into the physiology of a lipophilic corynebacterium that lacks mycolic acids.</title>
        <authorList>
            <person name="Tauch A."/>
            <person name="Schneider J."/>
            <person name="Szczepanowski R."/>
            <person name="Tilker A."/>
            <person name="Viehoever P."/>
            <person name="Gartemann K.-H."/>
            <person name="Arnold W."/>
            <person name="Blom J."/>
            <person name="Brinkrolf K."/>
            <person name="Brune I."/>
            <person name="Goetker S."/>
            <person name="Weisshaar B."/>
            <person name="Goesmann A."/>
            <person name="Droege M."/>
            <person name="Puehler A."/>
        </authorList>
    </citation>
    <scope>NUCLEOTIDE SEQUENCE [LARGE SCALE GENOMIC DNA]</scope>
    <source>
        <strain>DSM 44385 / JCM 11950 / CIP 105744 / CCUG 35717</strain>
    </source>
</reference>
<dbReference type="EMBL" id="CP001620">
    <property type="protein sequence ID" value="ACR18550.1"/>
    <property type="molecule type" value="Genomic_DNA"/>
</dbReference>
<dbReference type="RefSeq" id="WP_012732437.1">
    <property type="nucleotide sequence ID" value="NC_012704.1"/>
</dbReference>
<dbReference type="SMR" id="C4LL45"/>
<dbReference type="STRING" id="645127.ckrop_1830"/>
<dbReference type="GeneID" id="92726627"/>
<dbReference type="KEGG" id="ckp:ckrop_1830"/>
<dbReference type="eggNOG" id="COG0197">
    <property type="taxonomic scope" value="Bacteria"/>
</dbReference>
<dbReference type="HOGENOM" id="CLU_078858_2_1_11"/>
<dbReference type="OrthoDB" id="9802589at2"/>
<dbReference type="Proteomes" id="UP000001473">
    <property type="component" value="Chromosome"/>
</dbReference>
<dbReference type="GO" id="GO:0022625">
    <property type="term" value="C:cytosolic large ribosomal subunit"/>
    <property type="evidence" value="ECO:0007669"/>
    <property type="project" value="TreeGrafter"/>
</dbReference>
<dbReference type="GO" id="GO:0019843">
    <property type="term" value="F:rRNA binding"/>
    <property type="evidence" value="ECO:0007669"/>
    <property type="project" value="UniProtKB-UniRule"/>
</dbReference>
<dbReference type="GO" id="GO:0003735">
    <property type="term" value="F:structural constituent of ribosome"/>
    <property type="evidence" value="ECO:0007669"/>
    <property type="project" value="InterPro"/>
</dbReference>
<dbReference type="GO" id="GO:0000049">
    <property type="term" value="F:tRNA binding"/>
    <property type="evidence" value="ECO:0007669"/>
    <property type="project" value="UniProtKB-KW"/>
</dbReference>
<dbReference type="GO" id="GO:0006412">
    <property type="term" value="P:translation"/>
    <property type="evidence" value="ECO:0007669"/>
    <property type="project" value="UniProtKB-UniRule"/>
</dbReference>
<dbReference type="CDD" id="cd01433">
    <property type="entry name" value="Ribosomal_L16_L10e"/>
    <property type="match status" value="1"/>
</dbReference>
<dbReference type="FunFam" id="3.90.1170.10:FF:000001">
    <property type="entry name" value="50S ribosomal protein L16"/>
    <property type="match status" value="1"/>
</dbReference>
<dbReference type="Gene3D" id="3.90.1170.10">
    <property type="entry name" value="Ribosomal protein L10e/L16"/>
    <property type="match status" value="1"/>
</dbReference>
<dbReference type="HAMAP" id="MF_01342">
    <property type="entry name" value="Ribosomal_uL16"/>
    <property type="match status" value="1"/>
</dbReference>
<dbReference type="InterPro" id="IPR047873">
    <property type="entry name" value="Ribosomal_uL16"/>
</dbReference>
<dbReference type="InterPro" id="IPR000114">
    <property type="entry name" value="Ribosomal_uL16_bact-type"/>
</dbReference>
<dbReference type="InterPro" id="IPR020798">
    <property type="entry name" value="Ribosomal_uL16_CS"/>
</dbReference>
<dbReference type="InterPro" id="IPR016180">
    <property type="entry name" value="Ribosomal_uL16_dom"/>
</dbReference>
<dbReference type="InterPro" id="IPR036920">
    <property type="entry name" value="Ribosomal_uL16_sf"/>
</dbReference>
<dbReference type="NCBIfam" id="TIGR01164">
    <property type="entry name" value="rplP_bact"/>
    <property type="match status" value="1"/>
</dbReference>
<dbReference type="PANTHER" id="PTHR12220">
    <property type="entry name" value="50S/60S RIBOSOMAL PROTEIN L16"/>
    <property type="match status" value="1"/>
</dbReference>
<dbReference type="PANTHER" id="PTHR12220:SF13">
    <property type="entry name" value="LARGE RIBOSOMAL SUBUNIT PROTEIN UL16M"/>
    <property type="match status" value="1"/>
</dbReference>
<dbReference type="Pfam" id="PF00252">
    <property type="entry name" value="Ribosomal_L16"/>
    <property type="match status" value="1"/>
</dbReference>
<dbReference type="PRINTS" id="PR00060">
    <property type="entry name" value="RIBOSOMALL16"/>
</dbReference>
<dbReference type="SUPFAM" id="SSF54686">
    <property type="entry name" value="Ribosomal protein L16p/L10e"/>
    <property type="match status" value="1"/>
</dbReference>
<dbReference type="PROSITE" id="PS00586">
    <property type="entry name" value="RIBOSOMAL_L16_1"/>
    <property type="match status" value="1"/>
</dbReference>
<dbReference type="PROSITE" id="PS00701">
    <property type="entry name" value="RIBOSOMAL_L16_2"/>
    <property type="match status" value="1"/>
</dbReference>
<feature type="chain" id="PRO_1000214724" description="Large ribosomal subunit protein uL16">
    <location>
        <begin position="1"/>
        <end position="138"/>
    </location>
</feature>
<gene>
    <name evidence="1" type="primary">rplP</name>
    <name type="ordered locus">ckrop_1830</name>
</gene>
<accession>C4LL45</accession>
<evidence type="ECO:0000255" key="1">
    <source>
        <dbReference type="HAMAP-Rule" id="MF_01342"/>
    </source>
</evidence>
<evidence type="ECO:0000305" key="2"/>
<comment type="function">
    <text evidence="1">Binds 23S rRNA and is also seen to make contacts with the A and possibly P site tRNAs.</text>
</comment>
<comment type="subunit">
    <text evidence="1">Part of the 50S ribosomal subunit.</text>
</comment>
<comment type="similarity">
    <text evidence="1">Belongs to the universal ribosomal protein uL16 family.</text>
</comment>
<keyword id="KW-1185">Reference proteome</keyword>
<keyword id="KW-0687">Ribonucleoprotein</keyword>
<keyword id="KW-0689">Ribosomal protein</keyword>
<keyword id="KW-0694">RNA-binding</keyword>
<keyword id="KW-0699">rRNA-binding</keyword>
<keyword id="KW-0820">tRNA-binding</keyword>
<organism>
    <name type="scientific">Corynebacterium kroppenstedtii (strain DSM 44385 / JCM 11950 / CIP 105744 / CCUG 35717)</name>
    <dbReference type="NCBI Taxonomy" id="645127"/>
    <lineage>
        <taxon>Bacteria</taxon>
        <taxon>Bacillati</taxon>
        <taxon>Actinomycetota</taxon>
        <taxon>Actinomycetes</taxon>
        <taxon>Mycobacteriales</taxon>
        <taxon>Corynebacteriaceae</taxon>
        <taxon>Corynebacterium</taxon>
    </lineage>
</organism>
<protein>
    <recommendedName>
        <fullName evidence="1">Large ribosomal subunit protein uL16</fullName>
    </recommendedName>
    <alternativeName>
        <fullName evidence="2">50S ribosomal protein L16</fullName>
    </alternativeName>
</protein>
<proteinExistence type="inferred from homology"/>